<evidence type="ECO:0000250" key="1">
    <source>
        <dbReference type="UniProtKB" id="Q9Y5J1"/>
    </source>
</evidence>
<evidence type="ECO:0000256" key="2">
    <source>
        <dbReference type="SAM" id="MobiDB-lite"/>
    </source>
</evidence>
<evidence type="ECO:0000305" key="3"/>
<evidence type="ECO:0007744" key="4">
    <source>
    </source>
</evidence>
<evidence type="ECO:0007744" key="5">
    <source>
    </source>
</evidence>
<evidence type="ECO:0007744" key="6">
    <source>
    </source>
</evidence>
<evidence type="ECO:0007744" key="7">
    <source>
    </source>
</evidence>
<evidence type="ECO:0007744" key="8">
    <source>
    </source>
</evidence>
<gene>
    <name type="primary">Utp18</name>
    <name type="synonym">Wdr50</name>
</gene>
<proteinExistence type="evidence at protein level"/>
<reference key="1">
    <citation type="journal article" date="2009" name="PLoS Biol.">
        <title>Lineage-specific biology revealed by a finished genome assembly of the mouse.</title>
        <authorList>
            <person name="Church D.M."/>
            <person name="Goodstadt L."/>
            <person name="Hillier L.W."/>
            <person name="Zody M.C."/>
            <person name="Goldstein S."/>
            <person name="She X."/>
            <person name="Bult C.J."/>
            <person name="Agarwala R."/>
            <person name="Cherry J.L."/>
            <person name="DiCuccio M."/>
            <person name="Hlavina W."/>
            <person name="Kapustin Y."/>
            <person name="Meric P."/>
            <person name="Maglott D."/>
            <person name="Birtle Z."/>
            <person name="Marques A.C."/>
            <person name="Graves T."/>
            <person name="Zhou S."/>
            <person name="Teague B."/>
            <person name="Potamousis K."/>
            <person name="Churas C."/>
            <person name="Place M."/>
            <person name="Herschleb J."/>
            <person name="Runnheim R."/>
            <person name="Forrest D."/>
            <person name="Amos-Landgraf J."/>
            <person name="Schwartz D.C."/>
            <person name="Cheng Z."/>
            <person name="Lindblad-Toh K."/>
            <person name="Eichler E.E."/>
            <person name="Ponting C.P."/>
        </authorList>
    </citation>
    <scope>NUCLEOTIDE SEQUENCE [LARGE SCALE GENOMIC DNA]</scope>
    <source>
        <strain>C57BL/6J</strain>
    </source>
</reference>
<reference key="2">
    <citation type="journal article" date="2007" name="J. Proteome Res.">
        <title>A differential phosphoproteomic analysis of retinoic acid-treated P19 cells.</title>
        <authorList>
            <person name="Smith J.C."/>
            <person name="Duchesne M.A."/>
            <person name="Tozzi P."/>
            <person name="Ethier M."/>
            <person name="Figeys D."/>
        </authorList>
    </citation>
    <scope>PHOSPHORYLATION [LARGE SCALE ANALYSIS] AT SER-206</scope>
    <scope>IDENTIFICATION BY MASS SPECTROMETRY [LARGE SCALE ANALYSIS]</scope>
    <source>
        <tissue>Teratocarcinoma</tissue>
    </source>
</reference>
<reference key="3">
    <citation type="journal article" date="2007" name="Proc. Natl. Acad. Sci. U.S.A.">
        <title>Large-scale phosphorylation analysis of mouse liver.</title>
        <authorList>
            <person name="Villen J."/>
            <person name="Beausoleil S.A."/>
            <person name="Gerber S.A."/>
            <person name="Gygi S.P."/>
        </authorList>
    </citation>
    <scope>PHOSPHORYLATION [LARGE SCALE ANALYSIS] AT SER-114; SER-115 AND SER-206</scope>
    <scope>IDENTIFICATION BY MASS SPECTROMETRY [LARGE SCALE ANALYSIS]</scope>
    <source>
        <tissue>Liver</tissue>
    </source>
</reference>
<reference key="4">
    <citation type="journal article" date="2008" name="J. Proteome Res.">
        <title>Specific phosphopeptide enrichment with immobilized titanium ion affinity chromatography adsorbent for phosphoproteome analysis.</title>
        <authorList>
            <person name="Zhou H."/>
            <person name="Ye M."/>
            <person name="Dong J."/>
            <person name="Han G."/>
            <person name="Jiang X."/>
            <person name="Wu R."/>
            <person name="Zou H."/>
        </authorList>
    </citation>
    <scope>IDENTIFICATION BY MASS SPECTROMETRY [LARGE SCALE ANALYSIS]</scope>
    <source>
        <tissue>Liver</tissue>
    </source>
</reference>
<reference key="5">
    <citation type="journal article" date="2009" name="Immunity">
        <title>The phagosomal proteome in interferon-gamma-activated macrophages.</title>
        <authorList>
            <person name="Trost M."/>
            <person name="English L."/>
            <person name="Lemieux S."/>
            <person name="Courcelles M."/>
            <person name="Desjardins M."/>
            <person name="Thibault P."/>
        </authorList>
    </citation>
    <scope>PHOSPHORYLATION [LARGE SCALE ANALYSIS] AT SER-114; SER-115; SER-118; SER-201; SER-202 AND SER-206</scope>
    <scope>IDENTIFICATION BY MASS SPECTROMETRY [LARGE SCALE ANALYSIS]</scope>
</reference>
<reference key="6">
    <citation type="journal article" date="2009" name="Mol. Cell. Proteomics">
        <title>Large scale localization of protein phosphorylation by use of electron capture dissociation mass spectrometry.</title>
        <authorList>
            <person name="Sweet S.M."/>
            <person name="Bailey C.M."/>
            <person name="Cunningham D.L."/>
            <person name="Heath J.K."/>
            <person name="Cooper H.J."/>
        </authorList>
    </citation>
    <scope>PHOSPHORYLATION [LARGE SCALE ANALYSIS] AT SER-114; SER-115 AND SER-118</scope>
    <scope>IDENTIFICATION BY MASS SPECTROMETRY [LARGE SCALE ANALYSIS]</scope>
    <source>
        <tissue>Embryonic fibroblast</tissue>
    </source>
</reference>
<reference key="7">
    <citation type="journal article" date="2010" name="Cell">
        <title>A tissue-specific atlas of mouse protein phosphorylation and expression.</title>
        <authorList>
            <person name="Huttlin E.L."/>
            <person name="Jedrychowski M.P."/>
            <person name="Elias J.E."/>
            <person name="Goswami T."/>
            <person name="Rad R."/>
            <person name="Beausoleil S.A."/>
            <person name="Villen J."/>
            <person name="Haas W."/>
            <person name="Sowa M.E."/>
            <person name="Gygi S.P."/>
        </authorList>
    </citation>
    <scope>PHOSPHORYLATION [LARGE SCALE ANALYSIS] AT SER-114; SER-115; SER-118; SER-202 AND SER-206</scope>
    <scope>IDENTIFICATION BY MASS SPECTROMETRY [LARGE SCALE ANALYSIS]</scope>
    <source>
        <tissue>Brain</tissue>
        <tissue>Brown adipose tissue</tissue>
        <tissue>Kidney</tissue>
        <tissue>Liver</tissue>
        <tissue>Lung</tissue>
        <tissue>Pancreas</tissue>
        <tissue>Spleen</tissue>
        <tissue>Testis</tissue>
    </source>
</reference>
<dbReference type="EMBL" id="AL663078">
    <property type="status" value="NOT_ANNOTATED_CDS"/>
    <property type="molecule type" value="Genomic_DNA"/>
</dbReference>
<dbReference type="CCDS" id="CCDS25245.1"/>
<dbReference type="RefSeq" id="NP_001013393.1">
    <property type="nucleotide sequence ID" value="NM_001013375.1"/>
</dbReference>
<dbReference type="SMR" id="Q5SSI6"/>
<dbReference type="BioGRID" id="229843">
    <property type="interactions" value="25"/>
</dbReference>
<dbReference type="FunCoup" id="Q5SSI6">
    <property type="interactions" value="4213"/>
</dbReference>
<dbReference type="STRING" id="10090.ENSMUSP00000068103"/>
<dbReference type="GlyGen" id="Q5SSI6">
    <property type="glycosylation" value="3 sites, 1 O-linked glycan (1 site)"/>
</dbReference>
<dbReference type="iPTMnet" id="Q5SSI6"/>
<dbReference type="PhosphoSitePlus" id="Q5SSI6"/>
<dbReference type="SwissPalm" id="Q5SSI6"/>
<dbReference type="jPOST" id="Q5SSI6"/>
<dbReference type="PaxDb" id="10090-ENSMUSP00000068103"/>
<dbReference type="ProteomicsDB" id="299665"/>
<dbReference type="Pumba" id="Q5SSI6"/>
<dbReference type="Antibodypedia" id="30799">
    <property type="antibodies" value="77 antibodies from 19 providers"/>
</dbReference>
<dbReference type="DNASU" id="217109"/>
<dbReference type="Ensembl" id="ENSMUST00000066888.10">
    <property type="protein sequence ID" value="ENSMUSP00000068103.4"/>
    <property type="gene ID" value="ENSMUSG00000054079.13"/>
</dbReference>
<dbReference type="GeneID" id="217109"/>
<dbReference type="KEGG" id="mmu:217109"/>
<dbReference type="UCSC" id="uc007kxk.1">
    <property type="organism name" value="mouse"/>
</dbReference>
<dbReference type="AGR" id="MGI:1923402"/>
<dbReference type="CTD" id="51096"/>
<dbReference type="MGI" id="MGI:1923402">
    <property type="gene designation" value="Utp18"/>
</dbReference>
<dbReference type="VEuPathDB" id="HostDB:ENSMUSG00000054079"/>
<dbReference type="eggNOG" id="KOG2055">
    <property type="taxonomic scope" value="Eukaryota"/>
</dbReference>
<dbReference type="GeneTree" id="ENSGT00440000033919"/>
<dbReference type="HOGENOM" id="CLU_011055_3_1_1"/>
<dbReference type="InParanoid" id="Q5SSI6"/>
<dbReference type="OMA" id="DLNRATY"/>
<dbReference type="OrthoDB" id="1935146at2759"/>
<dbReference type="PhylomeDB" id="Q5SSI6"/>
<dbReference type="TreeFam" id="TF313426"/>
<dbReference type="Reactome" id="R-MMU-6791226">
    <property type="pathway name" value="Major pathway of rRNA processing in the nucleolus and cytosol"/>
</dbReference>
<dbReference type="BioGRID-ORCS" id="217109">
    <property type="hits" value="30 hits in 80 CRISPR screens"/>
</dbReference>
<dbReference type="ChiTaRS" id="Utp18">
    <property type="organism name" value="mouse"/>
</dbReference>
<dbReference type="PRO" id="PR:Q5SSI6"/>
<dbReference type="Proteomes" id="UP000000589">
    <property type="component" value="Chromosome 11"/>
</dbReference>
<dbReference type="RNAct" id="Q5SSI6">
    <property type="molecule type" value="protein"/>
</dbReference>
<dbReference type="Bgee" id="ENSMUSG00000054079">
    <property type="expression patterns" value="Expressed in primitive streak and 256 other cell types or tissues"/>
</dbReference>
<dbReference type="ExpressionAtlas" id="Q5SSI6">
    <property type="expression patterns" value="baseline and differential"/>
</dbReference>
<dbReference type="GO" id="GO:0031965">
    <property type="term" value="C:nuclear membrane"/>
    <property type="evidence" value="ECO:0007669"/>
    <property type="project" value="Ensembl"/>
</dbReference>
<dbReference type="GO" id="GO:0005730">
    <property type="term" value="C:nucleolus"/>
    <property type="evidence" value="ECO:0007669"/>
    <property type="project" value="UniProtKB-SubCell"/>
</dbReference>
<dbReference type="GO" id="GO:0005654">
    <property type="term" value="C:nucleoplasm"/>
    <property type="evidence" value="ECO:0007669"/>
    <property type="project" value="Ensembl"/>
</dbReference>
<dbReference type="GO" id="GO:0032040">
    <property type="term" value="C:small-subunit processome"/>
    <property type="evidence" value="ECO:0000250"/>
    <property type="project" value="UniProtKB"/>
</dbReference>
<dbReference type="GO" id="GO:0042274">
    <property type="term" value="P:ribosomal small subunit biogenesis"/>
    <property type="evidence" value="ECO:0000250"/>
    <property type="project" value="UniProtKB"/>
</dbReference>
<dbReference type="GO" id="GO:0006364">
    <property type="term" value="P:rRNA processing"/>
    <property type="evidence" value="ECO:0007669"/>
    <property type="project" value="UniProtKB-KW"/>
</dbReference>
<dbReference type="FunFam" id="2.130.10.10:FF:000121">
    <property type="entry name" value="U3 small nucleolar RNA-associated protein 18 homolog"/>
    <property type="match status" value="1"/>
</dbReference>
<dbReference type="Gene3D" id="2.130.10.10">
    <property type="entry name" value="YVTN repeat-like/Quinoprotein amine dehydrogenase"/>
    <property type="match status" value="1"/>
</dbReference>
<dbReference type="InterPro" id="IPR045161">
    <property type="entry name" value="Utp18"/>
</dbReference>
<dbReference type="InterPro" id="IPR015943">
    <property type="entry name" value="WD40/YVTN_repeat-like_dom_sf"/>
</dbReference>
<dbReference type="InterPro" id="IPR036322">
    <property type="entry name" value="WD40_repeat_dom_sf"/>
</dbReference>
<dbReference type="InterPro" id="IPR001680">
    <property type="entry name" value="WD40_rpt"/>
</dbReference>
<dbReference type="PANTHER" id="PTHR18359:SF0">
    <property type="entry name" value="U3 SMALL NUCLEOLAR RNA-ASSOCIATED PROTEIN 18 HOMOLOG"/>
    <property type="match status" value="1"/>
</dbReference>
<dbReference type="PANTHER" id="PTHR18359">
    <property type="entry name" value="WD-REPEAT PROTEIN-RELATED"/>
    <property type="match status" value="1"/>
</dbReference>
<dbReference type="SMART" id="SM00320">
    <property type="entry name" value="WD40"/>
    <property type="match status" value="6"/>
</dbReference>
<dbReference type="SUPFAM" id="SSF50978">
    <property type="entry name" value="WD40 repeat-like"/>
    <property type="match status" value="1"/>
</dbReference>
<dbReference type="PROSITE" id="PS50082">
    <property type="entry name" value="WD_REPEATS_2"/>
    <property type="match status" value="1"/>
</dbReference>
<dbReference type="PROSITE" id="PS50294">
    <property type="entry name" value="WD_REPEATS_REGION"/>
    <property type="match status" value="1"/>
</dbReference>
<sequence length="552" mass="61218">MPPERKSRTRRDRRAGATPGRKARPGSGSTPAKAARSSQRTQPAEPRAAPSAGSAAAAAEEEESRLRQRNRLTLEDDKPAAERCLEQLVFGDVEDDEDALLQRLRSSRGQLHGSSDESEVENEAKDIFSQKKKQPVWVDEDDEDEEIVDMSNNRFRKDIMKNASESKLSKDKLQKRLKEEFQHAMGGVPDWAEAGSKRRTSSDDESEEDEDDLLQRTGNFISTSTSLPRGILKMKNCRPANAERPTTARISSVQFHPGAQVVMVSGVDNAISLFQVDGKTNPKIQSIYLEKFPIFKACFSANGEEVLATSMHSKVLYVYDMLAGKLIPVHQVRGLKEKTVKQFEVSPDGSFLLISGIAGFSHLLSMKTKELIGSMKINGRIAASTFSSDSKRIYTYSENGEVYVWDVNSRKCMNRFLDEGSLCGLSIAASKNGQYVACGSKSGVVNIYNQDSCLQQTNPKPIKAIMNLVTGVTSLAFNPTTEILAVASRKMKEAVRLVHLPSCTVFSNFPVFKKSTLSRVQTMDFSPRGGYFALGNEKGRALMYRLHHYSDF</sequence>
<feature type="chain" id="PRO_0000051406" description="U3 small nucleolar RNA-associated protein 18 homolog">
    <location>
        <begin position="1"/>
        <end position="552"/>
    </location>
</feature>
<feature type="repeat" description="WD 1">
    <location>
        <begin position="245"/>
        <end position="284"/>
    </location>
</feature>
<feature type="repeat" description="WD 2">
    <location>
        <begin position="289"/>
        <end position="329"/>
    </location>
</feature>
<feature type="repeat" description="WD 3">
    <location>
        <begin position="376"/>
        <end position="415"/>
    </location>
</feature>
<feature type="repeat" description="WD 4">
    <location>
        <begin position="417"/>
        <end position="458"/>
    </location>
</feature>
<feature type="repeat" description="WD 5">
    <location>
        <begin position="467"/>
        <end position="508"/>
    </location>
</feature>
<feature type="repeat" description="WD 6">
    <location>
        <begin position="515"/>
        <end position="551"/>
    </location>
</feature>
<feature type="region of interest" description="Disordered" evidence="2">
    <location>
        <begin position="1"/>
        <end position="81"/>
    </location>
</feature>
<feature type="region of interest" description="Disordered" evidence="2">
    <location>
        <begin position="104"/>
        <end position="143"/>
    </location>
</feature>
<feature type="region of interest" description="Disordered" evidence="2">
    <location>
        <begin position="183"/>
        <end position="214"/>
    </location>
</feature>
<feature type="compositionally biased region" description="Low complexity" evidence="2">
    <location>
        <begin position="43"/>
        <end position="58"/>
    </location>
</feature>
<feature type="compositionally biased region" description="Basic and acidic residues" evidence="2">
    <location>
        <begin position="72"/>
        <end position="81"/>
    </location>
</feature>
<feature type="compositionally biased region" description="Acidic residues" evidence="2">
    <location>
        <begin position="203"/>
        <end position="212"/>
    </location>
</feature>
<feature type="modified residue" description="Phosphoserine" evidence="4 6 7 8">
    <location>
        <position position="114"/>
    </location>
</feature>
<feature type="modified residue" description="Phosphoserine" evidence="4 6 7 8">
    <location>
        <position position="115"/>
    </location>
</feature>
<feature type="modified residue" description="Phosphoserine" evidence="6 7 8">
    <location>
        <position position="118"/>
    </location>
</feature>
<feature type="modified residue" description="Phosphothreonine" evidence="1">
    <location>
        <position position="200"/>
    </location>
</feature>
<feature type="modified residue" description="Phosphoserine" evidence="7">
    <location>
        <position position="201"/>
    </location>
</feature>
<feature type="modified residue" description="Phosphoserine" evidence="7 8">
    <location>
        <position position="202"/>
    </location>
</feature>
<feature type="modified residue" description="Phosphoserine" evidence="4 5 7 8">
    <location>
        <position position="206"/>
    </location>
</feature>
<feature type="modified residue" description="Phosphothreonine" evidence="1">
    <location>
        <position position="217"/>
    </location>
</feature>
<feature type="cross-link" description="Glycyl lysine isopeptide (Lys-Gly) (interchain with G-Cter in SUMO2)" evidence="1">
    <location>
        <position position="78"/>
    </location>
</feature>
<feature type="cross-link" description="Glycyl lysine isopeptide (Lys-Gly) (interchain with G-Cter in SUMO2)" evidence="1">
    <location>
        <position position="178"/>
    </location>
</feature>
<feature type="cross-link" description="Glycyl lysine isopeptide (Lys-Gly) (interchain with G-Cter in SUMO2)" evidence="1">
    <location>
        <position position="197"/>
    </location>
</feature>
<feature type="cross-link" description="Glycyl lysine isopeptide (Lys-Gly) (interchain with G-Cter in SUMO2)" evidence="1">
    <location>
        <position position="513"/>
    </location>
</feature>
<comment type="function">
    <text evidence="1">Part of the small subunit (SSU) processome, first precursor of the small eukaryotic ribosomal subunit. During the assembly of the SSU processome in the nucleolus, many ribosome biogenesis factors, an RNA chaperone and ribosomal proteins associate with the nascent pre-rRNA and work in concert to generate RNA folding, modifications, rearrangements and cleavage as well as targeted degradation of pre-ribosomal RNA by the RNA exosome. Involved in nucleolar processing of pre-18S ribosomal RNA.</text>
</comment>
<comment type="subunit">
    <text evidence="1">Part of the small subunit (SSU) processome, composed of more than 70 proteins and the RNA chaperone small nucleolar RNA (snoRNA) U3.</text>
</comment>
<comment type="subcellular location">
    <subcellularLocation>
        <location evidence="1">Nucleus</location>
        <location evidence="1">Nucleolus</location>
    </subcellularLocation>
</comment>
<comment type="similarity">
    <text evidence="3">Belongs to the WD repeat UTP18 family.</text>
</comment>
<protein>
    <recommendedName>
        <fullName>U3 small nucleolar RNA-associated protein 18 homolog</fullName>
    </recommendedName>
    <alternativeName>
        <fullName>WD repeat-containing protein 50</fullName>
    </alternativeName>
</protein>
<name>UTP18_MOUSE</name>
<organism>
    <name type="scientific">Mus musculus</name>
    <name type="common">Mouse</name>
    <dbReference type="NCBI Taxonomy" id="10090"/>
    <lineage>
        <taxon>Eukaryota</taxon>
        <taxon>Metazoa</taxon>
        <taxon>Chordata</taxon>
        <taxon>Craniata</taxon>
        <taxon>Vertebrata</taxon>
        <taxon>Euteleostomi</taxon>
        <taxon>Mammalia</taxon>
        <taxon>Eutheria</taxon>
        <taxon>Euarchontoglires</taxon>
        <taxon>Glires</taxon>
        <taxon>Rodentia</taxon>
        <taxon>Myomorpha</taxon>
        <taxon>Muroidea</taxon>
        <taxon>Muridae</taxon>
        <taxon>Murinae</taxon>
        <taxon>Mus</taxon>
        <taxon>Mus</taxon>
    </lineage>
</organism>
<accession>Q5SSI6</accession>
<keyword id="KW-1017">Isopeptide bond</keyword>
<keyword id="KW-0539">Nucleus</keyword>
<keyword id="KW-0597">Phosphoprotein</keyword>
<keyword id="KW-1185">Reference proteome</keyword>
<keyword id="KW-0677">Repeat</keyword>
<keyword id="KW-0698">rRNA processing</keyword>
<keyword id="KW-0832">Ubl conjugation</keyword>
<keyword id="KW-0853">WD repeat</keyword>